<feature type="chain" id="PRO_1000031163" description="Ribonuclease HII">
    <location>
        <begin position="1"/>
        <end position="264"/>
    </location>
</feature>
<feature type="domain" description="RNase H type-2" evidence="2">
    <location>
        <begin position="33"/>
        <end position="224"/>
    </location>
</feature>
<feature type="region of interest" description="Disordered" evidence="3">
    <location>
        <begin position="222"/>
        <end position="264"/>
    </location>
</feature>
<feature type="binding site" evidence="1">
    <location>
        <position position="39"/>
    </location>
    <ligand>
        <name>a divalent metal cation</name>
        <dbReference type="ChEBI" id="CHEBI:60240"/>
    </ligand>
</feature>
<feature type="binding site" evidence="1">
    <location>
        <position position="40"/>
    </location>
    <ligand>
        <name>a divalent metal cation</name>
        <dbReference type="ChEBI" id="CHEBI:60240"/>
    </ligand>
</feature>
<feature type="binding site" evidence="1">
    <location>
        <position position="133"/>
    </location>
    <ligand>
        <name>a divalent metal cation</name>
        <dbReference type="ChEBI" id="CHEBI:60240"/>
    </ligand>
</feature>
<organism>
    <name type="scientific">Mycobacterium bovis (strain BCG / Pasteur 1173P2)</name>
    <dbReference type="NCBI Taxonomy" id="410289"/>
    <lineage>
        <taxon>Bacteria</taxon>
        <taxon>Bacillati</taxon>
        <taxon>Actinomycetota</taxon>
        <taxon>Actinomycetes</taxon>
        <taxon>Mycobacteriales</taxon>
        <taxon>Mycobacteriaceae</taxon>
        <taxon>Mycobacterium</taxon>
        <taxon>Mycobacterium tuberculosis complex</taxon>
    </lineage>
</organism>
<comment type="function">
    <text evidence="1">Endonuclease that specifically degrades the RNA of RNA-DNA hybrids.</text>
</comment>
<comment type="catalytic activity">
    <reaction evidence="1">
        <text>Endonucleolytic cleavage to 5'-phosphomonoester.</text>
        <dbReference type="EC" id="3.1.26.4"/>
    </reaction>
</comment>
<comment type="cofactor">
    <cofactor evidence="1">
        <name>Mn(2+)</name>
        <dbReference type="ChEBI" id="CHEBI:29035"/>
    </cofactor>
    <cofactor evidence="1">
        <name>Mg(2+)</name>
        <dbReference type="ChEBI" id="CHEBI:18420"/>
    </cofactor>
    <text evidence="1">Manganese or magnesium. Binds 1 divalent metal ion per monomer in the absence of substrate. May bind a second metal ion after substrate binding.</text>
</comment>
<comment type="subcellular location">
    <subcellularLocation>
        <location evidence="1">Cytoplasm</location>
    </subcellularLocation>
</comment>
<comment type="similarity">
    <text evidence="1">Belongs to the RNase HII family.</text>
</comment>
<gene>
    <name evidence="1" type="primary">rnhB</name>
    <name type="ordered locus">BCG_2923c</name>
</gene>
<proteinExistence type="inferred from homology"/>
<evidence type="ECO:0000255" key="1">
    <source>
        <dbReference type="HAMAP-Rule" id="MF_00052"/>
    </source>
</evidence>
<evidence type="ECO:0000255" key="2">
    <source>
        <dbReference type="PROSITE-ProRule" id="PRU01319"/>
    </source>
</evidence>
<evidence type="ECO:0000256" key="3">
    <source>
        <dbReference type="SAM" id="MobiDB-lite"/>
    </source>
</evidence>
<reference key="1">
    <citation type="journal article" date="2007" name="Proc. Natl. Acad. Sci. U.S.A.">
        <title>Genome plasticity of BCG and impact on vaccine efficacy.</title>
        <authorList>
            <person name="Brosch R."/>
            <person name="Gordon S.V."/>
            <person name="Garnier T."/>
            <person name="Eiglmeier K."/>
            <person name="Frigui W."/>
            <person name="Valenti P."/>
            <person name="Dos Santos S."/>
            <person name="Duthoy S."/>
            <person name="Lacroix C."/>
            <person name="Garcia-Pelayo C."/>
            <person name="Inwald J.K."/>
            <person name="Golby P."/>
            <person name="Garcia J.N."/>
            <person name="Hewinson R.G."/>
            <person name="Behr M.A."/>
            <person name="Quail M.A."/>
            <person name="Churcher C."/>
            <person name="Barrell B.G."/>
            <person name="Parkhill J."/>
            <person name="Cole S.T."/>
        </authorList>
    </citation>
    <scope>NUCLEOTIDE SEQUENCE [LARGE SCALE GENOMIC DNA]</scope>
    <source>
        <strain>BCG / Pasteur 1173P2</strain>
    </source>
</reference>
<protein>
    <recommendedName>
        <fullName evidence="1">Ribonuclease HII</fullName>
        <shortName evidence="1">RNase HII</shortName>
        <ecNumber evidence="1">3.1.26.4</ecNumber>
    </recommendedName>
</protein>
<sequence length="264" mass="27646">MTKTWPPRTVIRKSGGLRGMRTLESALHRGGLGPVAGVDEVGRGACAGPLVVAACVLGPGRIASLAALDDSKKLSEQAREKLFPLICRYAVAYHVVFIPSAEVDRRGVHVANIEGMRRAVAGLAVRPGYVLSDGFRVPGLPMPSLPVIGGDAAAACIAAASVLAKVSRDRVMVALDADHPGYGFAEHKGYSTPAHSRALARLGPCPQHRYSFINVRRVASGSNTAEVADGQPDPRDGTAQTGEGRWSKSSHPATMRATGRAQGT</sequence>
<dbReference type="EC" id="3.1.26.4" evidence="1"/>
<dbReference type="EMBL" id="AM408590">
    <property type="protein sequence ID" value="CAL72912.1"/>
    <property type="molecule type" value="Genomic_DNA"/>
</dbReference>
<dbReference type="RefSeq" id="WP_003414713.1">
    <property type="nucleotide sequence ID" value="NC_008769.1"/>
</dbReference>
<dbReference type="SMR" id="A1KMP6"/>
<dbReference type="KEGG" id="mbb:BCG_2923c"/>
<dbReference type="HOGENOM" id="CLU_036532_1_0_11"/>
<dbReference type="Proteomes" id="UP000001472">
    <property type="component" value="Chromosome"/>
</dbReference>
<dbReference type="GO" id="GO:0005737">
    <property type="term" value="C:cytoplasm"/>
    <property type="evidence" value="ECO:0007669"/>
    <property type="project" value="UniProtKB-SubCell"/>
</dbReference>
<dbReference type="GO" id="GO:0032299">
    <property type="term" value="C:ribonuclease H2 complex"/>
    <property type="evidence" value="ECO:0007669"/>
    <property type="project" value="TreeGrafter"/>
</dbReference>
<dbReference type="GO" id="GO:0030145">
    <property type="term" value="F:manganese ion binding"/>
    <property type="evidence" value="ECO:0007669"/>
    <property type="project" value="UniProtKB-UniRule"/>
</dbReference>
<dbReference type="GO" id="GO:0003723">
    <property type="term" value="F:RNA binding"/>
    <property type="evidence" value="ECO:0007669"/>
    <property type="project" value="InterPro"/>
</dbReference>
<dbReference type="GO" id="GO:0004523">
    <property type="term" value="F:RNA-DNA hybrid ribonuclease activity"/>
    <property type="evidence" value="ECO:0007669"/>
    <property type="project" value="UniProtKB-UniRule"/>
</dbReference>
<dbReference type="GO" id="GO:0043137">
    <property type="term" value="P:DNA replication, removal of RNA primer"/>
    <property type="evidence" value="ECO:0007669"/>
    <property type="project" value="TreeGrafter"/>
</dbReference>
<dbReference type="GO" id="GO:0006298">
    <property type="term" value="P:mismatch repair"/>
    <property type="evidence" value="ECO:0007669"/>
    <property type="project" value="TreeGrafter"/>
</dbReference>
<dbReference type="CDD" id="cd07182">
    <property type="entry name" value="RNase_HII_bacteria_HII_like"/>
    <property type="match status" value="1"/>
</dbReference>
<dbReference type="FunFam" id="3.30.420.10:FF:000113">
    <property type="entry name" value="Ribonuclease HII"/>
    <property type="match status" value="1"/>
</dbReference>
<dbReference type="Gene3D" id="3.30.420.10">
    <property type="entry name" value="Ribonuclease H-like superfamily/Ribonuclease H"/>
    <property type="match status" value="1"/>
</dbReference>
<dbReference type="HAMAP" id="MF_00052_B">
    <property type="entry name" value="RNase_HII_B"/>
    <property type="match status" value="1"/>
</dbReference>
<dbReference type="InterPro" id="IPR022898">
    <property type="entry name" value="RNase_HII"/>
</dbReference>
<dbReference type="InterPro" id="IPR001352">
    <property type="entry name" value="RNase_HII/HIII"/>
</dbReference>
<dbReference type="InterPro" id="IPR024567">
    <property type="entry name" value="RNase_HII/HIII_dom"/>
</dbReference>
<dbReference type="InterPro" id="IPR012337">
    <property type="entry name" value="RNaseH-like_sf"/>
</dbReference>
<dbReference type="InterPro" id="IPR036397">
    <property type="entry name" value="RNaseH_sf"/>
</dbReference>
<dbReference type="NCBIfam" id="NF000595">
    <property type="entry name" value="PRK00015.1-3"/>
    <property type="match status" value="1"/>
</dbReference>
<dbReference type="NCBIfam" id="NF000598">
    <property type="entry name" value="PRK00015.2-2"/>
    <property type="match status" value="1"/>
</dbReference>
<dbReference type="NCBIfam" id="NF000600">
    <property type="entry name" value="PRK00015.2-4"/>
    <property type="match status" value="1"/>
</dbReference>
<dbReference type="PANTHER" id="PTHR10954">
    <property type="entry name" value="RIBONUCLEASE H2 SUBUNIT A"/>
    <property type="match status" value="1"/>
</dbReference>
<dbReference type="PANTHER" id="PTHR10954:SF18">
    <property type="entry name" value="RIBONUCLEASE HII"/>
    <property type="match status" value="1"/>
</dbReference>
<dbReference type="Pfam" id="PF01351">
    <property type="entry name" value="RNase_HII"/>
    <property type="match status" value="1"/>
</dbReference>
<dbReference type="SUPFAM" id="SSF53098">
    <property type="entry name" value="Ribonuclease H-like"/>
    <property type="match status" value="1"/>
</dbReference>
<dbReference type="PROSITE" id="PS51975">
    <property type="entry name" value="RNASE_H_2"/>
    <property type="match status" value="1"/>
</dbReference>
<keyword id="KW-0963">Cytoplasm</keyword>
<keyword id="KW-0255">Endonuclease</keyword>
<keyword id="KW-0378">Hydrolase</keyword>
<keyword id="KW-0464">Manganese</keyword>
<keyword id="KW-0479">Metal-binding</keyword>
<keyword id="KW-0540">Nuclease</keyword>
<name>RNH2_MYCBP</name>
<accession>A1KMP6</accession>